<name>PGFRL_BOVIN</name>
<reference key="1">
    <citation type="journal article" date="2005" name="BMC Genomics">
        <title>Characterization of 954 bovine full-CDS cDNA sequences.</title>
        <authorList>
            <person name="Harhay G.P."/>
            <person name="Sonstegard T.S."/>
            <person name="Keele J.W."/>
            <person name="Heaton M.P."/>
            <person name="Clawson M.L."/>
            <person name="Snelling W.M."/>
            <person name="Wiedmann R.T."/>
            <person name="Van Tassell C.P."/>
            <person name="Smith T.P.L."/>
        </authorList>
    </citation>
    <scope>NUCLEOTIDE SEQUENCE [LARGE SCALE MRNA]</scope>
</reference>
<reference key="2">
    <citation type="submission" date="2006-02" db="EMBL/GenBank/DDBJ databases">
        <authorList>
            <consortium name="NIH - Mammalian Gene Collection (MGC) project"/>
        </authorList>
    </citation>
    <scope>NUCLEOTIDE SEQUENCE [LARGE SCALE MRNA]</scope>
    <source>
        <tissue>Uterus</tissue>
    </source>
</reference>
<gene>
    <name type="primary">PDGFRL</name>
</gene>
<organism>
    <name type="scientific">Bos taurus</name>
    <name type="common">Bovine</name>
    <dbReference type="NCBI Taxonomy" id="9913"/>
    <lineage>
        <taxon>Eukaryota</taxon>
        <taxon>Metazoa</taxon>
        <taxon>Chordata</taxon>
        <taxon>Craniata</taxon>
        <taxon>Vertebrata</taxon>
        <taxon>Euteleostomi</taxon>
        <taxon>Mammalia</taxon>
        <taxon>Eutheria</taxon>
        <taxon>Laurasiatheria</taxon>
        <taxon>Artiodactyla</taxon>
        <taxon>Ruminantia</taxon>
        <taxon>Pecora</taxon>
        <taxon>Bovidae</taxon>
        <taxon>Bovinae</taxon>
        <taxon>Bos</taxon>
    </lineage>
</organism>
<feature type="signal peptide" evidence="2">
    <location>
        <begin position="1"/>
        <end position="21"/>
    </location>
</feature>
<feature type="chain" id="PRO_0000233089" description="Platelet-derived growth factor receptor-like protein">
    <location>
        <begin position="22"/>
        <end position="375"/>
    </location>
</feature>
<feature type="domain" description="Ig-like C2-type 1">
    <location>
        <begin position="62"/>
        <end position="159"/>
    </location>
</feature>
<feature type="domain" description="Ig-like C2-type 2">
    <location>
        <begin position="272"/>
        <end position="373"/>
    </location>
</feature>
<feature type="region of interest" description="Disordered" evidence="4">
    <location>
        <begin position="20"/>
        <end position="64"/>
    </location>
</feature>
<feature type="compositionally biased region" description="Basic residues" evidence="4">
    <location>
        <begin position="40"/>
        <end position="50"/>
    </location>
</feature>
<feature type="glycosylation site" description="N-linked (GlcNAc...) asparagine" evidence="2">
    <location>
        <position position="132"/>
    </location>
</feature>
<feature type="glycosylation site" description="N-linked (GlcNAc...) asparagine" evidence="2">
    <location>
        <position position="219"/>
    </location>
</feature>
<feature type="disulfide bond" evidence="3">
    <location>
        <begin position="96"/>
        <end position="143"/>
    </location>
</feature>
<feature type="disulfide bond" evidence="3">
    <location>
        <begin position="293"/>
        <end position="357"/>
    </location>
</feature>
<accession>Q5BIP2</accession>
<keyword id="KW-1015">Disulfide bond</keyword>
<keyword id="KW-0325">Glycoprotein</keyword>
<keyword id="KW-0393">Immunoglobulin domain</keyword>
<keyword id="KW-1185">Reference proteome</keyword>
<keyword id="KW-0677">Repeat</keyword>
<keyword id="KW-0964">Secreted</keyword>
<keyword id="KW-0732">Signal</keyword>
<comment type="subunit">
    <text evidence="1">Forms a complex composed of PDGFRL, TNK2 and GRB2.</text>
</comment>
<comment type="subcellular location">
    <subcellularLocation>
        <location evidence="5">Secreted</location>
    </subcellularLocation>
</comment>
<protein>
    <recommendedName>
        <fullName>Platelet-derived growth factor receptor-like protein</fullName>
        <shortName>PDGFR-like protein</shortName>
    </recommendedName>
</protein>
<sequence>MKIWLLLGLLLMHEALEDVTGQHPPKNKRPKEPGENRIKPTNKKVKPKIPKIKDRDSADPTPKTQSIMTQMMDKGRFQKPAATLSLVAGQTLELRCKGNKIGWSYPAYLDTFKDTRLSVKQHERYGQLTLVNSTAADTGEFSCWGQLCTGYVCRRDEAKTGSTYIFFTEKGELFVPSPSHFDVVYLNPDRQAVVPCRVTVLSAKVTLHREFPAKEIPANGTDIVYDLKRGFVYLQPHVGHQGVVYCKAEAGGKSQISVKYQLLYAEVPRGPPSTTILASSNKVKGGDDVSVLCTVLGEPDVEVEFRWTYPGQKDERPVTIQDSWRLIHRGLGHTTRISQSVLSIEDFETIDAGYYICTAQNLQGQTTVATTVESS</sequence>
<dbReference type="EMBL" id="BT021182">
    <property type="protein sequence ID" value="AAX31364.1"/>
    <property type="molecule type" value="mRNA"/>
</dbReference>
<dbReference type="EMBL" id="BC113220">
    <property type="protein sequence ID" value="AAI13221.1"/>
    <property type="molecule type" value="mRNA"/>
</dbReference>
<dbReference type="RefSeq" id="NP_001030378.1">
    <property type="nucleotide sequence ID" value="NM_001035301.1"/>
</dbReference>
<dbReference type="SMR" id="Q5BIP2"/>
<dbReference type="FunCoup" id="Q5BIP2">
    <property type="interactions" value="50"/>
</dbReference>
<dbReference type="STRING" id="9913.ENSBTAP00000067464"/>
<dbReference type="GlyCosmos" id="Q5BIP2">
    <property type="glycosylation" value="2 sites, No reported glycans"/>
</dbReference>
<dbReference type="GlyGen" id="Q5BIP2">
    <property type="glycosylation" value="2 sites"/>
</dbReference>
<dbReference type="PaxDb" id="9913-ENSBTAP00000002553"/>
<dbReference type="GeneID" id="515017"/>
<dbReference type="KEGG" id="bta:515017"/>
<dbReference type="CTD" id="5157"/>
<dbReference type="eggNOG" id="KOG0200">
    <property type="taxonomic scope" value="Eukaryota"/>
</dbReference>
<dbReference type="InParanoid" id="Q5BIP2"/>
<dbReference type="OrthoDB" id="9864753at2759"/>
<dbReference type="Proteomes" id="UP000009136">
    <property type="component" value="Unplaced"/>
</dbReference>
<dbReference type="GO" id="GO:0005576">
    <property type="term" value="C:extracellular region"/>
    <property type="evidence" value="ECO:0007669"/>
    <property type="project" value="UniProtKB-SubCell"/>
</dbReference>
<dbReference type="FunFam" id="2.60.40.10:FF:000223">
    <property type="entry name" value="Platelet-derived growth factor receptor beta"/>
    <property type="match status" value="1"/>
</dbReference>
<dbReference type="FunFam" id="2.60.40.10:FF:000907">
    <property type="entry name" value="Platelet-derived growth factor receptor-like protein"/>
    <property type="match status" value="1"/>
</dbReference>
<dbReference type="FunFam" id="2.60.40.10:FF:001395">
    <property type="entry name" value="Platelet-derived growth factor receptor-like protein"/>
    <property type="match status" value="1"/>
</dbReference>
<dbReference type="Gene3D" id="2.60.40.10">
    <property type="entry name" value="Immunoglobulins"/>
    <property type="match status" value="3"/>
</dbReference>
<dbReference type="InterPro" id="IPR007110">
    <property type="entry name" value="Ig-like_dom"/>
</dbReference>
<dbReference type="InterPro" id="IPR036179">
    <property type="entry name" value="Ig-like_dom_sf"/>
</dbReference>
<dbReference type="InterPro" id="IPR013783">
    <property type="entry name" value="Ig-like_fold"/>
</dbReference>
<dbReference type="InterPro" id="IPR003599">
    <property type="entry name" value="Ig_sub"/>
</dbReference>
<dbReference type="InterPro" id="IPR003598">
    <property type="entry name" value="Ig_sub2"/>
</dbReference>
<dbReference type="InterPro" id="IPR042495">
    <property type="entry name" value="PDGFRL"/>
</dbReference>
<dbReference type="PANTHER" id="PTHR15360">
    <property type="entry name" value="PLATELET-DERIVED GROWTH FACTOR RECEPTOR LIKE"/>
    <property type="match status" value="1"/>
</dbReference>
<dbReference type="PANTHER" id="PTHR15360:SF1">
    <property type="entry name" value="PLATELET-DERIVED GROWTH FACTOR RECEPTOR-LIKE PROTEIN"/>
    <property type="match status" value="1"/>
</dbReference>
<dbReference type="Pfam" id="PF13927">
    <property type="entry name" value="Ig_3"/>
    <property type="match status" value="1"/>
</dbReference>
<dbReference type="Pfam" id="PF21339">
    <property type="entry name" value="VEGFR-1-like_Ig-like"/>
    <property type="match status" value="1"/>
</dbReference>
<dbReference type="SMART" id="SM00409">
    <property type="entry name" value="IG"/>
    <property type="match status" value="2"/>
</dbReference>
<dbReference type="SMART" id="SM00408">
    <property type="entry name" value="IGc2"/>
    <property type="match status" value="1"/>
</dbReference>
<dbReference type="SUPFAM" id="SSF48726">
    <property type="entry name" value="Immunoglobulin"/>
    <property type="match status" value="3"/>
</dbReference>
<dbReference type="PROSITE" id="PS50835">
    <property type="entry name" value="IG_LIKE"/>
    <property type="match status" value="1"/>
</dbReference>
<proteinExistence type="evidence at transcript level"/>
<evidence type="ECO:0000250" key="1"/>
<evidence type="ECO:0000255" key="2"/>
<evidence type="ECO:0000255" key="3">
    <source>
        <dbReference type="PROSITE-ProRule" id="PRU00114"/>
    </source>
</evidence>
<evidence type="ECO:0000256" key="4">
    <source>
        <dbReference type="SAM" id="MobiDB-lite"/>
    </source>
</evidence>
<evidence type="ECO:0000305" key="5"/>